<feature type="chain" id="PRO_0000182959" description="Deoxyuridine 5'-triphosphate nucleotidohydrolase">
    <location>
        <begin position="1"/>
        <end position="376"/>
    </location>
</feature>
<gene>
    <name evidence="1" type="primary">DUT</name>
    <name type="ordered locus">U45</name>
</gene>
<proteinExistence type="inferred from homology"/>
<sequence>MYSAISEKISETITLQRQTSSRYIEFFVFRNVDINELWTTDISEDKTHDVWPAVNEKSFKKFLENELTSYQRPIPLLGIPQNGTVSKTCKKEKQRETDCVNYERKRGNPVTFYPRHRAKRNANTDTCISEEPSILVSHHRNSKMDVFMDTNKITLVNRELIWVPHDQVRIVKLDISLYIPDGFFGVITGHSNDVFCECVTEIITDETDISVFLMNLSEHSLMLLPGDVEFSINFLPCYIPEPWEMINLSPPEFAIFHLKASREFIAKPNSYTIQYFDAMYVCADELKALMIPSKEIAKLGLLIETYIWNKDTIPSIKIFNSTRKTIYIPTGICIARIIFTCGHFCLSLMPERAINRLQVLDANSSFLFHYAASNNA</sequence>
<organismHost>
    <name type="scientific">Homo sapiens</name>
    <name type="common">Human</name>
    <dbReference type="NCBI Taxonomy" id="9606"/>
</organismHost>
<organism>
    <name type="scientific">Human herpesvirus 6A (strain Uganda-1102)</name>
    <name type="common">HHV-6 variant A</name>
    <name type="synonym">Human B lymphotropic virus</name>
    <dbReference type="NCBI Taxonomy" id="10370"/>
    <lineage>
        <taxon>Viruses</taxon>
        <taxon>Duplodnaviria</taxon>
        <taxon>Heunggongvirae</taxon>
        <taxon>Peploviricota</taxon>
        <taxon>Herviviricetes</taxon>
        <taxon>Herpesvirales</taxon>
        <taxon>Orthoherpesviridae</taxon>
        <taxon>Betaherpesvirinae</taxon>
        <taxon>Roseolovirus</taxon>
        <taxon>Roseolovirus humanbeta6a</taxon>
        <taxon>Human betaherpesvirus 6A</taxon>
    </lineage>
</organism>
<protein>
    <recommendedName>
        <fullName evidence="1">Deoxyuridine 5'-triphosphate nucleotidohydrolase</fullName>
        <shortName evidence="1">dUTPase</shortName>
        <ecNumber evidence="1">3.6.1.23</ecNumber>
    </recommendedName>
    <alternativeName>
        <fullName evidence="1">dUTP pyrophosphatase</fullName>
    </alternativeName>
</protein>
<evidence type="ECO:0000255" key="1">
    <source>
        <dbReference type="HAMAP-Rule" id="MF_04031"/>
    </source>
</evidence>
<comment type="function">
    <text evidence="1">Involved in nucleotide metabolism: produces dUMP, the immediate precursor of thymidine nucleotides and decreases the intracellular concentration of dUTP to avoid uracil incorporation into viral DNA.</text>
</comment>
<comment type="catalytic activity">
    <reaction evidence="1">
        <text>dUTP + H2O = dUMP + diphosphate + H(+)</text>
        <dbReference type="Rhea" id="RHEA:10248"/>
        <dbReference type="ChEBI" id="CHEBI:15377"/>
        <dbReference type="ChEBI" id="CHEBI:15378"/>
        <dbReference type="ChEBI" id="CHEBI:33019"/>
        <dbReference type="ChEBI" id="CHEBI:61555"/>
        <dbReference type="ChEBI" id="CHEBI:246422"/>
        <dbReference type="EC" id="3.6.1.23"/>
    </reaction>
</comment>
<comment type="cofactor">
    <cofactor evidence="1">
        <name>Mg(2+)</name>
        <dbReference type="ChEBI" id="CHEBI:18420"/>
    </cofactor>
</comment>
<comment type="similarity">
    <text evidence="1">Belongs to the dUTPase family.</text>
</comment>
<keyword id="KW-0378">Hydrolase</keyword>
<keyword id="KW-0460">Magnesium</keyword>
<keyword id="KW-0479">Metal-binding</keyword>
<keyword id="KW-0546">Nucleotide metabolism</keyword>
<keyword id="KW-1185">Reference proteome</keyword>
<name>DUT_HHV6U</name>
<dbReference type="EC" id="3.6.1.23" evidence="1"/>
<dbReference type="EMBL" id="X64320">
    <property type="protein sequence ID" value="CAA45600.1"/>
    <property type="molecule type" value="Genomic_DNA"/>
</dbReference>
<dbReference type="EMBL" id="X83413">
    <property type="protein sequence ID" value="CAA58379.1"/>
    <property type="molecule type" value="Genomic_DNA"/>
</dbReference>
<dbReference type="EMBL" id="X92436">
    <property type="protein sequence ID" value="CAA63171.1"/>
    <property type="molecule type" value="Genomic_DNA"/>
</dbReference>
<dbReference type="PIR" id="A56653">
    <property type="entry name" value="A56653"/>
</dbReference>
<dbReference type="RefSeq" id="NP_042938.1">
    <property type="nucleotide sequence ID" value="NC_001664.2"/>
</dbReference>
<dbReference type="SMR" id="Q06095"/>
<dbReference type="DNASU" id="1487924"/>
<dbReference type="GeneID" id="1487924"/>
<dbReference type="KEGG" id="vg:1487924"/>
<dbReference type="Proteomes" id="UP000009295">
    <property type="component" value="Segment"/>
</dbReference>
<dbReference type="GO" id="GO:0004170">
    <property type="term" value="F:dUTP diphosphatase activity"/>
    <property type="evidence" value="ECO:0007669"/>
    <property type="project" value="UniProtKB-EC"/>
</dbReference>
<dbReference type="GO" id="GO:0046872">
    <property type="term" value="F:metal ion binding"/>
    <property type="evidence" value="ECO:0007669"/>
    <property type="project" value="UniProtKB-KW"/>
</dbReference>
<dbReference type="GO" id="GO:0046080">
    <property type="term" value="P:dUTP metabolic process"/>
    <property type="evidence" value="ECO:0007669"/>
    <property type="project" value="InterPro"/>
</dbReference>
<dbReference type="Gene3D" id="2.70.40.10">
    <property type="match status" value="2"/>
</dbReference>
<dbReference type="HAMAP" id="MF_04031">
    <property type="entry name" value="HSV_DUT"/>
    <property type="match status" value="1"/>
</dbReference>
<dbReference type="InterPro" id="IPR029054">
    <property type="entry name" value="dUTPase-like"/>
</dbReference>
<dbReference type="InterPro" id="IPR036157">
    <property type="entry name" value="dUTPase-like_sf"/>
</dbReference>
<dbReference type="InterPro" id="IPR034745">
    <property type="entry name" value="HSV_DUT"/>
</dbReference>
<dbReference type="Pfam" id="PF00692">
    <property type="entry name" value="dUTPase"/>
    <property type="match status" value="1"/>
</dbReference>
<dbReference type="SUPFAM" id="SSF51283">
    <property type="entry name" value="dUTPase-like"/>
    <property type="match status" value="2"/>
</dbReference>
<reference key="1">
    <citation type="journal article" date="1992" name="DNA Seq.">
        <title>Infectivity determinants encoded in a conserved gene block of human herpesvirus-6.</title>
        <authorList>
            <person name="Gompels U.A."/>
            <person name="Carss A.L."/>
            <person name="Sun N."/>
            <person name="Arrand J.R."/>
        </authorList>
    </citation>
    <scope>NUCLEOTIDE SEQUENCE [GENOMIC DNA]</scope>
</reference>
<reference key="2">
    <citation type="journal article" date="1995" name="Virology">
        <title>The DNA sequence of human herpesvirus-6: structure, coding content, and genome evolution.</title>
        <authorList>
            <person name="Gompels U.A."/>
            <person name="Nicholas J."/>
            <person name="Lawrence G.L."/>
            <person name="Jones M."/>
            <person name="Thomson B.J."/>
            <person name="Martin M.E.D."/>
            <person name="Efstathiou S."/>
            <person name="Craxton M.A."/>
            <person name="Macaulay H.A."/>
        </authorList>
    </citation>
    <scope>NUCLEOTIDE SEQUENCE [LARGE SCALE GENOMIC DNA]</scope>
</reference>
<accession>Q06095</accession>